<evidence type="ECO:0000255" key="1">
    <source>
        <dbReference type="HAMAP-Rule" id="MF_00316"/>
    </source>
</evidence>
<dbReference type="EC" id="2.7.7.77" evidence="1"/>
<dbReference type="EMBL" id="FM178379">
    <property type="protein sequence ID" value="CAQ79083.1"/>
    <property type="molecule type" value="Genomic_DNA"/>
</dbReference>
<dbReference type="RefSeq" id="WP_012550091.1">
    <property type="nucleotide sequence ID" value="NC_011312.1"/>
</dbReference>
<dbReference type="SMR" id="B6EKR0"/>
<dbReference type="KEGG" id="vsa:VSAL_I1398"/>
<dbReference type="eggNOG" id="COG0746">
    <property type="taxonomic scope" value="Bacteria"/>
</dbReference>
<dbReference type="HOGENOM" id="CLU_055597_5_1_6"/>
<dbReference type="Proteomes" id="UP000001730">
    <property type="component" value="Chromosome 1"/>
</dbReference>
<dbReference type="GO" id="GO:0005737">
    <property type="term" value="C:cytoplasm"/>
    <property type="evidence" value="ECO:0007669"/>
    <property type="project" value="UniProtKB-SubCell"/>
</dbReference>
<dbReference type="GO" id="GO:0005525">
    <property type="term" value="F:GTP binding"/>
    <property type="evidence" value="ECO:0007669"/>
    <property type="project" value="UniProtKB-UniRule"/>
</dbReference>
<dbReference type="GO" id="GO:0046872">
    <property type="term" value="F:metal ion binding"/>
    <property type="evidence" value="ECO:0007669"/>
    <property type="project" value="UniProtKB-KW"/>
</dbReference>
<dbReference type="GO" id="GO:0061603">
    <property type="term" value="F:molybdenum cofactor guanylyltransferase activity"/>
    <property type="evidence" value="ECO:0007669"/>
    <property type="project" value="UniProtKB-EC"/>
</dbReference>
<dbReference type="GO" id="GO:1902758">
    <property type="term" value="P:bis(molybdopterin guanine dinucleotide)molybdenum biosynthetic process"/>
    <property type="evidence" value="ECO:0007669"/>
    <property type="project" value="TreeGrafter"/>
</dbReference>
<dbReference type="CDD" id="cd02503">
    <property type="entry name" value="MobA"/>
    <property type="match status" value="1"/>
</dbReference>
<dbReference type="Gene3D" id="3.90.550.10">
    <property type="entry name" value="Spore Coat Polysaccharide Biosynthesis Protein SpsA, Chain A"/>
    <property type="match status" value="1"/>
</dbReference>
<dbReference type="HAMAP" id="MF_00316">
    <property type="entry name" value="MobA"/>
    <property type="match status" value="1"/>
</dbReference>
<dbReference type="InterPro" id="IPR025877">
    <property type="entry name" value="MobA-like_NTP_Trfase"/>
</dbReference>
<dbReference type="InterPro" id="IPR013482">
    <property type="entry name" value="Molybde_CF_guanTrfase"/>
</dbReference>
<dbReference type="InterPro" id="IPR029044">
    <property type="entry name" value="Nucleotide-diphossugar_trans"/>
</dbReference>
<dbReference type="NCBIfam" id="TIGR02665">
    <property type="entry name" value="molyb_mobA"/>
    <property type="match status" value="1"/>
</dbReference>
<dbReference type="PANTHER" id="PTHR19136">
    <property type="entry name" value="MOLYBDENUM COFACTOR GUANYLYLTRANSFERASE"/>
    <property type="match status" value="1"/>
</dbReference>
<dbReference type="PANTHER" id="PTHR19136:SF81">
    <property type="entry name" value="MOLYBDENUM COFACTOR GUANYLYLTRANSFERASE"/>
    <property type="match status" value="1"/>
</dbReference>
<dbReference type="Pfam" id="PF12804">
    <property type="entry name" value="NTP_transf_3"/>
    <property type="match status" value="1"/>
</dbReference>
<dbReference type="SUPFAM" id="SSF53448">
    <property type="entry name" value="Nucleotide-diphospho-sugar transferases"/>
    <property type="match status" value="1"/>
</dbReference>
<sequence>MLQPKQTNWVILAGGQARRMGGQDKGFVTFQDKPLIEHALDTLRSQTDHIAINANRSIDNYSRYTVTFKDEFTDYPGPLAGMHAGLVNMASDWVGFIPCDSPNLPNNLISLLCNAVKDDTDIVVAHDGEYMQPVVTLMHKRIIPKIDAFLARGDRKIILLYKECNTVFADFSDYPNAFINLNSPQELEQFGTLL</sequence>
<keyword id="KW-0963">Cytoplasm</keyword>
<keyword id="KW-0342">GTP-binding</keyword>
<keyword id="KW-0460">Magnesium</keyword>
<keyword id="KW-0479">Metal-binding</keyword>
<keyword id="KW-0501">Molybdenum cofactor biosynthesis</keyword>
<keyword id="KW-0547">Nucleotide-binding</keyword>
<keyword id="KW-0808">Transferase</keyword>
<name>MOBA_ALISL</name>
<reference key="1">
    <citation type="journal article" date="2008" name="BMC Genomics">
        <title>The genome sequence of the fish pathogen Aliivibrio salmonicida strain LFI1238 shows extensive evidence of gene decay.</title>
        <authorList>
            <person name="Hjerde E."/>
            <person name="Lorentzen M.S."/>
            <person name="Holden M.T."/>
            <person name="Seeger K."/>
            <person name="Paulsen S."/>
            <person name="Bason N."/>
            <person name="Churcher C."/>
            <person name="Harris D."/>
            <person name="Norbertczak H."/>
            <person name="Quail M.A."/>
            <person name="Sanders S."/>
            <person name="Thurston S."/>
            <person name="Parkhill J."/>
            <person name="Willassen N.P."/>
            <person name="Thomson N.R."/>
        </authorList>
    </citation>
    <scope>NUCLEOTIDE SEQUENCE [LARGE SCALE GENOMIC DNA]</scope>
    <source>
        <strain>LFI1238</strain>
    </source>
</reference>
<feature type="chain" id="PRO_1000115787" description="Molybdenum cofactor guanylyltransferase">
    <location>
        <begin position="1"/>
        <end position="194"/>
    </location>
</feature>
<feature type="binding site" evidence="1">
    <location>
        <begin position="12"/>
        <end position="14"/>
    </location>
    <ligand>
        <name>GTP</name>
        <dbReference type="ChEBI" id="CHEBI:37565"/>
    </ligand>
</feature>
<feature type="binding site" evidence="1">
    <location>
        <position position="25"/>
    </location>
    <ligand>
        <name>GTP</name>
        <dbReference type="ChEBI" id="CHEBI:37565"/>
    </ligand>
</feature>
<feature type="binding site" evidence="1">
    <location>
        <position position="53"/>
    </location>
    <ligand>
        <name>GTP</name>
        <dbReference type="ChEBI" id="CHEBI:37565"/>
    </ligand>
</feature>
<feature type="binding site" evidence="1">
    <location>
        <position position="70"/>
    </location>
    <ligand>
        <name>GTP</name>
        <dbReference type="ChEBI" id="CHEBI:37565"/>
    </ligand>
</feature>
<feature type="binding site" evidence="1">
    <location>
        <position position="100"/>
    </location>
    <ligand>
        <name>GTP</name>
        <dbReference type="ChEBI" id="CHEBI:37565"/>
    </ligand>
</feature>
<feature type="binding site" evidence="1">
    <location>
        <position position="100"/>
    </location>
    <ligand>
        <name>Mg(2+)</name>
        <dbReference type="ChEBI" id="CHEBI:18420"/>
    </ligand>
</feature>
<gene>
    <name evidence="1" type="primary">mobA</name>
    <name type="ordered locus">VSAL_I1398</name>
</gene>
<protein>
    <recommendedName>
        <fullName evidence="1">Molybdenum cofactor guanylyltransferase</fullName>
        <shortName evidence="1">MoCo guanylyltransferase</shortName>
        <ecNumber evidence="1">2.7.7.77</ecNumber>
    </recommendedName>
    <alternativeName>
        <fullName evidence="1">GTP:molybdopterin guanylyltransferase</fullName>
    </alternativeName>
    <alternativeName>
        <fullName evidence="1">Mo-MPT guanylyltransferase</fullName>
    </alternativeName>
    <alternativeName>
        <fullName evidence="1">Molybdopterin guanylyltransferase</fullName>
    </alternativeName>
    <alternativeName>
        <fullName evidence="1">Molybdopterin-guanine dinucleotide synthase</fullName>
        <shortName evidence="1">MGD synthase</shortName>
    </alternativeName>
</protein>
<proteinExistence type="inferred from homology"/>
<comment type="function">
    <text evidence="1">Transfers a GMP moiety from GTP to Mo-molybdopterin (Mo-MPT) cofactor (Moco or molybdenum cofactor) to form Mo-molybdopterin guanine dinucleotide (Mo-MGD) cofactor.</text>
</comment>
<comment type="catalytic activity">
    <reaction evidence="1">
        <text>Mo-molybdopterin + GTP + H(+) = Mo-molybdopterin guanine dinucleotide + diphosphate</text>
        <dbReference type="Rhea" id="RHEA:34243"/>
        <dbReference type="ChEBI" id="CHEBI:15378"/>
        <dbReference type="ChEBI" id="CHEBI:33019"/>
        <dbReference type="ChEBI" id="CHEBI:37565"/>
        <dbReference type="ChEBI" id="CHEBI:71302"/>
        <dbReference type="ChEBI" id="CHEBI:71310"/>
        <dbReference type="EC" id="2.7.7.77"/>
    </reaction>
</comment>
<comment type="cofactor">
    <cofactor evidence="1">
        <name>Mg(2+)</name>
        <dbReference type="ChEBI" id="CHEBI:18420"/>
    </cofactor>
</comment>
<comment type="subunit">
    <text evidence="1">Monomer.</text>
</comment>
<comment type="subcellular location">
    <subcellularLocation>
        <location evidence="1">Cytoplasm</location>
    </subcellularLocation>
</comment>
<comment type="domain">
    <text evidence="1">The N-terminal domain determines nucleotide recognition and specific binding, while the C-terminal domain determines the specific binding to the target protein.</text>
</comment>
<comment type="similarity">
    <text evidence="1">Belongs to the MobA family.</text>
</comment>
<organism>
    <name type="scientific">Aliivibrio salmonicida (strain LFI1238)</name>
    <name type="common">Vibrio salmonicida (strain LFI1238)</name>
    <dbReference type="NCBI Taxonomy" id="316275"/>
    <lineage>
        <taxon>Bacteria</taxon>
        <taxon>Pseudomonadati</taxon>
        <taxon>Pseudomonadota</taxon>
        <taxon>Gammaproteobacteria</taxon>
        <taxon>Vibrionales</taxon>
        <taxon>Vibrionaceae</taxon>
        <taxon>Aliivibrio</taxon>
    </lineage>
</organism>
<accession>B6EKR0</accession>